<keyword id="KW-0240">DNA-directed RNA polymerase</keyword>
<keyword id="KW-0548">Nucleotidyltransferase</keyword>
<keyword id="KW-0804">Transcription</keyword>
<keyword id="KW-0808">Transferase</keyword>
<protein>
    <recommendedName>
        <fullName evidence="1">DNA-directed RNA polymerase subunit epsilon</fullName>
        <shortName evidence="1">RNAP epsilon subunit</shortName>
        <ecNumber evidence="1">2.7.7.6</ecNumber>
    </recommendedName>
    <alternativeName>
        <fullName evidence="1">RNA polymerase epsilon subunit</fullName>
    </alternativeName>
    <alternativeName>
        <fullName evidence="1">Transcriptase subunit epsilon</fullName>
    </alternativeName>
</protein>
<evidence type="ECO:0000255" key="1">
    <source>
        <dbReference type="HAMAP-Rule" id="MF_01553"/>
    </source>
</evidence>
<feature type="chain" id="PRO_1000087753" description="DNA-directed RNA polymerase subunit epsilon">
    <location>
        <begin position="1"/>
        <end position="72"/>
    </location>
</feature>
<name>RPOY_STAA2</name>
<proteinExistence type="inferred from homology"/>
<sequence>MAVFKVFYQHNRDEVIVRENTQSLYVEAQTEEQVRRYLKDRNFNIEFITKLEGAHLDYEKENSEHFNVEIAK</sequence>
<accession>A6U0Q8</accession>
<gene>
    <name evidence="1" type="primary">rpoY</name>
    <name type="ordered locus">SaurJH1_1172</name>
</gene>
<dbReference type="EC" id="2.7.7.6" evidence="1"/>
<dbReference type="EMBL" id="CP000736">
    <property type="protein sequence ID" value="ABR52026.1"/>
    <property type="molecule type" value="Genomic_DNA"/>
</dbReference>
<dbReference type="SMR" id="A6U0Q8"/>
<dbReference type="KEGG" id="sah:SaurJH1_1172"/>
<dbReference type="HOGENOM" id="CLU_187518_1_0_9"/>
<dbReference type="GO" id="GO:0000428">
    <property type="term" value="C:DNA-directed RNA polymerase complex"/>
    <property type="evidence" value="ECO:0007669"/>
    <property type="project" value="UniProtKB-KW"/>
</dbReference>
<dbReference type="GO" id="GO:0003677">
    <property type="term" value="F:DNA binding"/>
    <property type="evidence" value="ECO:0007669"/>
    <property type="project" value="UniProtKB-UniRule"/>
</dbReference>
<dbReference type="GO" id="GO:0003899">
    <property type="term" value="F:DNA-directed RNA polymerase activity"/>
    <property type="evidence" value="ECO:0007669"/>
    <property type="project" value="UniProtKB-UniRule"/>
</dbReference>
<dbReference type="GO" id="GO:0006351">
    <property type="term" value="P:DNA-templated transcription"/>
    <property type="evidence" value="ECO:0007669"/>
    <property type="project" value="UniProtKB-UniRule"/>
</dbReference>
<dbReference type="Gene3D" id="3.10.20.730">
    <property type="entry name" value="RNAP, epsilon subunit-like"/>
    <property type="match status" value="1"/>
</dbReference>
<dbReference type="HAMAP" id="MF_01553">
    <property type="entry name" value="RNApol_bact_RpoY"/>
    <property type="match status" value="1"/>
</dbReference>
<dbReference type="InterPro" id="IPR009907">
    <property type="entry name" value="RpoY"/>
</dbReference>
<dbReference type="NCBIfam" id="NF010188">
    <property type="entry name" value="PRK13667.1"/>
    <property type="match status" value="1"/>
</dbReference>
<dbReference type="Pfam" id="PF07288">
    <property type="entry name" value="RpoY"/>
    <property type="match status" value="1"/>
</dbReference>
<comment type="function">
    <text evidence="1">A non-essential component of RNA polymerase (RNAP).</text>
</comment>
<comment type="catalytic activity">
    <reaction evidence="1">
        <text>RNA(n) + a ribonucleoside 5'-triphosphate = RNA(n+1) + diphosphate</text>
        <dbReference type="Rhea" id="RHEA:21248"/>
        <dbReference type="Rhea" id="RHEA-COMP:14527"/>
        <dbReference type="Rhea" id="RHEA-COMP:17342"/>
        <dbReference type="ChEBI" id="CHEBI:33019"/>
        <dbReference type="ChEBI" id="CHEBI:61557"/>
        <dbReference type="ChEBI" id="CHEBI:140395"/>
        <dbReference type="EC" id="2.7.7.6"/>
    </reaction>
</comment>
<comment type="subunit">
    <text evidence="1">RNAP is composed of a core of 2 alpha, a beta and a beta' subunit. The core is associated with a delta subunit, and at least one of epsilon or omega. When a sigma factor is associated with the core the holoenzyme is formed, which can initiate transcription.</text>
</comment>
<comment type="similarity">
    <text evidence="1">Belongs to the RNA polymerase subunit epsilon family.</text>
</comment>
<organism>
    <name type="scientific">Staphylococcus aureus (strain JH1)</name>
    <dbReference type="NCBI Taxonomy" id="359787"/>
    <lineage>
        <taxon>Bacteria</taxon>
        <taxon>Bacillati</taxon>
        <taxon>Bacillota</taxon>
        <taxon>Bacilli</taxon>
        <taxon>Bacillales</taxon>
        <taxon>Staphylococcaceae</taxon>
        <taxon>Staphylococcus</taxon>
    </lineage>
</organism>
<reference key="1">
    <citation type="submission" date="2007-06" db="EMBL/GenBank/DDBJ databases">
        <title>Complete sequence of chromosome of Staphylococcus aureus subsp. aureus JH1.</title>
        <authorList>
            <consortium name="US DOE Joint Genome Institute"/>
            <person name="Copeland A."/>
            <person name="Lucas S."/>
            <person name="Lapidus A."/>
            <person name="Barry K."/>
            <person name="Detter J.C."/>
            <person name="Glavina del Rio T."/>
            <person name="Hammon N."/>
            <person name="Israni S."/>
            <person name="Dalin E."/>
            <person name="Tice H."/>
            <person name="Pitluck S."/>
            <person name="Chain P."/>
            <person name="Malfatti S."/>
            <person name="Shin M."/>
            <person name="Vergez L."/>
            <person name="Schmutz J."/>
            <person name="Larimer F."/>
            <person name="Land M."/>
            <person name="Hauser L."/>
            <person name="Kyrpides N."/>
            <person name="Ivanova N."/>
            <person name="Tomasz A."/>
            <person name="Richardson P."/>
        </authorList>
    </citation>
    <scope>NUCLEOTIDE SEQUENCE [LARGE SCALE GENOMIC DNA]</scope>
    <source>
        <strain>JH1</strain>
    </source>
</reference>